<name>PLIGB_ELAQU</name>
<dbReference type="EMBL" id="AB021426">
    <property type="protein sequence ID" value="BAA83079.1"/>
    <property type="molecule type" value="mRNA"/>
</dbReference>
<dbReference type="GO" id="GO:0005576">
    <property type="term" value="C:extracellular region"/>
    <property type="evidence" value="ECO:0007669"/>
    <property type="project" value="UniProtKB-SubCell"/>
</dbReference>
<dbReference type="GO" id="GO:0019834">
    <property type="term" value="F:phospholipase A2 inhibitor activity"/>
    <property type="evidence" value="ECO:0007669"/>
    <property type="project" value="UniProtKB-KW"/>
</dbReference>
<dbReference type="CDD" id="cd23572">
    <property type="entry name" value="TFP_LU_ECD_PINLYP_rpt2"/>
    <property type="match status" value="1"/>
</dbReference>
<dbReference type="CDD" id="cd23630">
    <property type="entry name" value="TFP_LU_ECD_PLIGB"/>
    <property type="match status" value="1"/>
</dbReference>
<dbReference type="Gene3D" id="2.10.60.10">
    <property type="entry name" value="CD59"/>
    <property type="match status" value="1"/>
</dbReference>
<dbReference type="InterPro" id="IPR050918">
    <property type="entry name" value="CNF-like_PLA2_Inhibitor"/>
</dbReference>
<dbReference type="InterPro" id="IPR016054">
    <property type="entry name" value="LY6_UPA_recep-like"/>
</dbReference>
<dbReference type="InterPro" id="IPR016338">
    <property type="entry name" value="PLipase_A2-inh_b-type"/>
</dbReference>
<dbReference type="InterPro" id="IPR004126">
    <property type="entry name" value="PLipase_A2_inh_N"/>
</dbReference>
<dbReference type="InterPro" id="IPR045860">
    <property type="entry name" value="Snake_toxin-like_sf"/>
</dbReference>
<dbReference type="PANTHER" id="PTHR20914">
    <property type="entry name" value="LY6/PLAUR DOMAIN-CONTAINING PROTEIN 8"/>
    <property type="match status" value="1"/>
</dbReference>
<dbReference type="PANTHER" id="PTHR20914:SF30">
    <property type="entry name" value="LY6_PLAUR DOMAIN CONTAINING 9"/>
    <property type="match status" value="1"/>
</dbReference>
<dbReference type="Pfam" id="PF02988">
    <property type="entry name" value="PLA2_inh"/>
    <property type="match status" value="1"/>
</dbReference>
<dbReference type="Pfam" id="PF00021">
    <property type="entry name" value="UPAR_LY6"/>
    <property type="match status" value="1"/>
</dbReference>
<dbReference type="PIRSF" id="PIRSF002023">
    <property type="entry name" value="PLA2_inhib_alpha/gamma"/>
    <property type="match status" value="1"/>
</dbReference>
<dbReference type="SUPFAM" id="SSF57302">
    <property type="entry name" value="Snake toxin-like"/>
    <property type="match status" value="2"/>
</dbReference>
<comment type="function">
    <text>Inhibits the enzymatic activity of phospholipase A2 (PA2).</text>
</comment>
<comment type="subunit">
    <text evidence="3">Heterodimer of subunit A and subunit B.</text>
</comment>
<comment type="subcellular location">
    <subcellularLocation>
        <location evidence="3">Secreted</location>
    </subcellularLocation>
    <text evidence="3">Secreted in blood plasma.</text>
</comment>
<comment type="tissue specificity">
    <text evidence="3">Expressed by the liver. Not expressed in esophagus, stomach, pancreas, spleen, gall bladder, small intestine, rectum, kidney, trachea, lung, testis and body fat.</text>
</comment>
<comment type="PTM">
    <text evidence="3">N-glycosylated.</text>
</comment>
<comment type="similarity">
    <text evidence="5">Belongs to the CNF-like-inhibitor family.</text>
</comment>
<reference key="1">
    <citation type="journal article" date="1999" name="Biochem. J.">
        <title>Purification, characterization and cDNA cloning of a phospholipase A2 inhibitor from the serum of the non-venomous snake Elaphe quadrivirgata.</title>
        <authorList>
            <person name="Okumura K."/>
            <person name="Masui K."/>
            <person name="Inoue S."/>
            <person name="Ikeda K."/>
            <person name="Hayashi K."/>
        </authorList>
    </citation>
    <scope>NUCLEOTIDE SEQUENCE [MRNA]</scope>
    <scope>PROTEIN SEQUENCE OF 20-34</scope>
    <scope>SUBCELLULAR LOCATION</scope>
    <scope>SUBUNIT</scope>
    <source>
        <tissue>Liver</tissue>
    </source>
</reference>
<accession>Q9PWI3</accession>
<feature type="signal peptide" evidence="3">
    <location>
        <begin position="1"/>
        <end position="19"/>
    </location>
</feature>
<feature type="chain" id="PRO_0000023001" description="Phospholipase A2 inhibitor gamma subunit B" evidence="6">
    <location>
        <begin position="20"/>
        <end position="200"/>
    </location>
</feature>
<feature type="glycosylation site" description="N-linked (GlcNAc...) asparagine" evidence="2">
    <location>
        <position position="31"/>
    </location>
</feature>
<feature type="disulfide bond" evidence="1">
    <location>
        <begin position="22"/>
        <end position="46"/>
    </location>
</feature>
<feature type="disulfide bond" evidence="1">
    <location>
        <begin position="25"/>
        <end position="32"/>
    </location>
</feature>
<feature type="disulfide bond" evidence="1">
    <location>
        <begin position="39"/>
        <end position="67"/>
    </location>
</feature>
<feature type="disulfide bond" evidence="1">
    <location>
        <begin position="73"/>
        <end position="94"/>
    </location>
</feature>
<feature type="disulfide bond" evidence="1">
    <location>
        <begin position="95"/>
        <end position="100"/>
    </location>
</feature>
<feature type="disulfide bond" evidence="1">
    <location>
        <begin position="120"/>
        <end position="145"/>
    </location>
</feature>
<feature type="disulfide bond" evidence="1">
    <location>
        <begin position="138"/>
        <end position="165"/>
    </location>
</feature>
<feature type="disulfide bond" evidence="1">
    <location>
        <begin position="171"/>
        <end position="191"/>
    </location>
</feature>
<evidence type="ECO:0000250" key="1">
    <source>
        <dbReference type="UniProtKB" id="Q7LZI2"/>
    </source>
</evidence>
<evidence type="ECO:0000255" key="2"/>
<evidence type="ECO:0000269" key="3">
    <source>
    </source>
</evidence>
<evidence type="ECO:0000303" key="4">
    <source>
    </source>
</evidence>
<evidence type="ECO:0000305" key="5"/>
<evidence type="ECO:0000305" key="6">
    <source>
    </source>
</evidence>
<protein>
    <recommendedName>
        <fullName evidence="4">Phospholipase A2 inhibitor gamma subunit B</fullName>
        <shortName evidence="4">gamma-PLI B</shortName>
    </recommendedName>
</protein>
<organism>
    <name type="scientific">Elaphe quadrivirgata</name>
    <name type="common">Japanese four-lined ratsnake</name>
    <name type="synonym">Coluber quadrivirgatus</name>
    <dbReference type="NCBI Taxonomy" id="86195"/>
    <lineage>
        <taxon>Eukaryota</taxon>
        <taxon>Metazoa</taxon>
        <taxon>Chordata</taxon>
        <taxon>Craniata</taxon>
        <taxon>Vertebrata</taxon>
        <taxon>Euteleostomi</taxon>
        <taxon>Lepidosauria</taxon>
        <taxon>Squamata</taxon>
        <taxon>Bifurcata</taxon>
        <taxon>Unidentata</taxon>
        <taxon>Episquamata</taxon>
        <taxon>Toxicofera</taxon>
        <taxon>Serpentes</taxon>
        <taxon>Colubroidea</taxon>
        <taxon>Colubridae</taxon>
        <taxon>Colubrinae</taxon>
        <taxon>Elaphe</taxon>
    </lineage>
</organism>
<keyword id="KW-0903">Direct protein sequencing</keyword>
<keyword id="KW-1015">Disulfide bond</keyword>
<keyword id="KW-0325">Glycoprotein</keyword>
<keyword id="KW-0593">Phospholipase A2 inhibitor</keyword>
<keyword id="KW-0964">Secreted</keyword>
<keyword id="KW-0732">Signal</keyword>
<proteinExistence type="evidence at protein level"/>
<sequence length="200" mass="22170">MKFLLFCCLFGTFLATGMCIDCEHCVVWGQNCTGWKETCGENEDTCVTYQTEVIRPPLSITFTAKTCGTSDTCHLDYVEANPHTELTLRAKRACCTGDECQTLPPPVLEPQVNRPNGLQCPGCIGLTSTECNEYLVSCQGSENQCLTIILKKPDFSLSEMSFKGCASENLCLLFEKKFWRFLEASEVDVKCTPAVPQTSQ</sequence>